<reference key="1">
    <citation type="journal article" date="2001" name="Genome Res.">
        <title>The complete genome sequence of the lactic acid bacterium Lactococcus lactis ssp. lactis IL1403.</title>
        <authorList>
            <person name="Bolotin A."/>
            <person name="Wincker P."/>
            <person name="Mauger S."/>
            <person name="Jaillon O."/>
            <person name="Malarme K."/>
            <person name="Weissenbach J."/>
            <person name="Ehrlich S.D."/>
            <person name="Sorokin A."/>
        </authorList>
    </citation>
    <scope>NUCLEOTIDE SEQUENCE [LARGE SCALE GENOMIC DNA]</scope>
    <source>
        <strain>IL1403</strain>
    </source>
</reference>
<accession>Q9CIS9</accession>
<keyword id="KW-0067">ATP-binding</keyword>
<keyword id="KW-1003">Cell membrane</keyword>
<keyword id="KW-0472">Membrane</keyword>
<keyword id="KW-0547">Nucleotide-binding</keyword>
<keyword id="KW-1185">Reference proteome</keyword>
<keyword id="KW-1278">Translocase</keyword>
<keyword id="KW-0813">Transport</keyword>
<proteinExistence type="inferred from homology"/>
<dbReference type="EC" id="7.-.-.-" evidence="1"/>
<dbReference type="EMBL" id="AE005176">
    <property type="protein sequence ID" value="AAK04375.1"/>
    <property type="molecule type" value="Genomic_DNA"/>
</dbReference>
<dbReference type="PIR" id="E86659">
    <property type="entry name" value="E86659"/>
</dbReference>
<dbReference type="RefSeq" id="NP_266433.1">
    <property type="nucleotide sequence ID" value="NC_002662.1"/>
</dbReference>
<dbReference type="RefSeq" id="WP_004255784.1">
    <property type="nucleotide sequence ID" value="NC_002662.1"/>
</dbReference>
<dbReference type="SMR" id="Q9CIS9"/>
<dbReference type="PaxDb" id="272623-L75718"/>
<dbReference type="EnsemblBacteria" id="AAK04375">
    <property type="protein sequence ID" value="AAK04375"/>
    <property type="gene ID" value="L75718"/>
</dbReference>
<dbReference type="KEGG" id="lla:L75718"/>
<dbReference type="PATRIC" id="fig|272623.7.peg.303"/>
<dbReference type="eggNOG" id="COG1122">
    <property type="taxonomic scope" value="Bacteria"/>
</dbReference>
<dbReference type="HOGENOM" id="CLU_000604_1_22_9"/>
<dbReference type="OrthoDB" id="9784332at2"/>
<dbReference type="Proteomes" id="UP000002196">
    <property type="component" value="Chromosome"/>
</dbReference>
<dbReference type="GO" id="GO:0043190">
    <property type="term" value="C:ATP-binding cassette (ABC) transporter complex"/>
    <property type="evidence" value="ECO:0007669"/>
    <property type="project" value="TreeGrafter"/>
</dbReference>
<dbReference type="GO" id="GO:0005524">
    <property type="term" value="F:ATP binding"/>
    <property type="evidence" value="ECO:0007669"/>
    <property type="project" value="UniProtKB-KW"/>
</dbReference>
<dbReference type="GO" id="GO:0016887">
    <property type="term" value="F:ATP hydrolysis activity"/>
    <property type="evidence" value="ECO:0007669"/>
    <property type="project" value="InterPro"/>
</dbReference>
<dbReference type="GO" id="GO:0042626">
    <property type="term" value="F:ATPase-coupled transmembrane transporter activity"/>
    <property type="evidence" value="ECO:0007669"/>
    <property type="project" value="TreeGrafter"/>
</dbReference>
<dbReference type="CDD" id="cd03225">
    <property type="entry name" value="ABC_cobalt_CbiO_domain1"/>
    <property type="match status" value="1"/>
</dbReference>
<dbReference type="FunFam" id="3.40.50.300:FF:000224">
    <property type="entry name" value="Energy-coupling factor transporter ATP-binding protein EcfA"/>
    <property type="match status" value="1"/>
</dbReference>
<dbReference type="Gene3D" id="3.40.50.300">
    <property type="entry name" value="P-loop containing nucleotide triphosphate hydrolases"/>
    <property type="match status" value="1"/>
</dbReference>
<dbReference type="InterPro" id="IPR003593">
    <property type="entry name" value="AAA+_ATPase"/>
</dbReference>
<dbReference type="InterPro" id="IPR003439">
    <property type="entry name" value="ABC_transporter-like_ATP-bd"/>
</dbReference>
<dbReference type="InterPro" id="IPR017871">
    <property type="entry name" value="ABC_transporter-like_CS"/>
</dbReference>
<dbReference type="InterPro" id="IPR015856">
    <property type="entry name" value="ABC_transpr_CbiO/EcfA_su"/>
</dbReference>
<dbReference type="InterPro" id="IPR050095">
    <property type="entry name" value="ECF_ABC_transporter_ATP-bd"/>
</dbReference>
<dbReference type="InterPro" id="IPR030947">
    <property type="entry name" value="EcfA_1"/>
</dbReference>
<dbReference type="InterPro" id="IPR027417">
    <property type="entry name" value="P-loop_NTPase"/>
</dbReference>
<dbReference type="NCBIfam" id="TIGR04520">
    <property type="entry name" value="ECF_ATPase_1"/>
    <property type="match status" value="1"/>
</dbReference>
<dbReference type="NCBIfam" id="NF010156">
    <property type="entry name" value="PRK13635.1"/>
    <property type="match status" value="1"/>
</dbReference>
<dbReference type="NCBIfam" id="NF010167">
    <property type="entry name" value="PRK13648.1"/>
    <property type="match status" value="1"/>
</dbReference>
<dbReference type="PANTHER" id="PTHR43553:SF24">
    <property type="entry name" value="ENERGY-COUPLING FACTOR TRANSPORTER ATP-BINDING PROTEIN ECFA1"/>
    <property type="match status" value="1"/>
</dbReference>
<dbReference type="PANTHER" id="PTHR43553">
    <property type="entry name" value="HEAVY METAL TRANSPORTER"/>
    <property type="match status" value="1"/>
</dbReference>
<dbReference type="Pfam" id="PF00005">
    <property type="entry name" value="ABC_tran"/>
    <property type="match status" value="1"/>
</dbReference>
<dbReference type="SMART" id="SM00382">
    <property type="entry name" value="AAA"/>
    <property type="match status" value="1"/>
</dbReference>
<dbReference type="SUPFAM" id="SSF52540">
    <property type="entry name" value="P-loop containing nucleoside triphosphate hydrolases"/>
    <property type="match status" value="1"/>
</dbReference>
<dbReference type="PROSITE" id="PS00211">
    <property type="entry name" value="ABC_TRANSPORTER_1"/>
    <property type="match status" value="1"/>
</dbReference>
<dbReference type="PROSITE" id="PS50893">
    <property type="entry name" value="ABC_TRANSPORTER_2"/>
    <property type="match status" value="1"/>
</dbReference>
<dbReference type="PROSITE" id="PS51246">
    <property type="entry name" value="CBIO"/>
    <property type="match status" value="1"/>
</dbReference>
<name>ECFA1_LACLA</name>
<sequence>MNKILEVENLVFKYEKESDVNQLNGVSFSITKGEWVSIIGQNGSGKSTTARLIDGLFEEFEGKVKIDGELLTAENVWNLRRKIGMVFQNPDNQFVGATVEDDVAFGMENQGIPREEMIKRVDEALLAVNMLDFKTREPARLSGGQKQRVAVAGIIALRPEIIILDESTSMLDPTGRQEIMRVIHEIKEKYQLTVLSITHDLDEAASSDRILVMKAGEIIKEAAPSELFATSEDMVEIGLDVPFSSNLMKDLRKNGFDLPEKYLSEDELVELLADKLR</sequence>
<comment type="function">
    <text evidence="1">ATP-binding (A) component of a common energy-coupling factor (ECF) ABC-transporter complex. Unlike classic ABC transporters this ECF transporter provides the energy necessary to transport a number of different substrates.</text>
</comment>
<comment type="subunit">
    <text evidence="1">Forms a stable energy-coupling factor (ECF) transporter complex composed of 2 membrane-embedded substrate-binding proteins (S component), 2 ATP-binding proteins (A component) and 2 transmembrane proteins (T component).</text>
</comment>
<comment type="subcellular location">
    <subcellularLocation>
        <location evidence="1">Cell membrane</location>
        <topology evidence="1">Peripheral membrane protein</topology>
    </subcellularLocation>
</comment>
<comment type="similarity">
    <text evidence="1">Belongs to the ABC transporter superfamily. Energy-coupling factor EcfA family.</text>
</comment>
<evidence type="ECO:0000255" key="1">
    <source>
        <dbReference type="HAMAP-Rule" id="MF_01710"/>
    </source>
</evidence>
<protein>
    <recommendedName>
        <fullName evidence="1">Energy-coupling factor transporter ATP-binding protein EcfA1</fullName>
        <shortName evidence="1">ECF transporter A component EcfA1</shortName>
        <ecNumber evidence="1">7.-.-.-</ecNumber>
    </recommendedName>
</protein>
<gene>
    <name evidence="1" type="primary">ecfA1</name>
    <name type="synonym">cbiO1</name>
    <name type="ordered locus">LL0277</name>
    <name type="ORF">L75718</name>
</gene>
<feature type="chain" id="PRO_0000092019" description="Energy-coupling factor transporter ATP-binding protein EcfA1">
    <location>
        <begin position="1"/>
        <end position="277"/>
    </location>
</feature>
<feature type="domain" description="ABC transporter" evidence="1">
    <location>
        <begin position="5"/>
        <end position="240"/>
    </location>
</feature>
<feature type="binding site" evidence="1">
    <location>
        <begin position="40"/>
        <end position="47"/>
    </location>
    <ligand>
        <name>ATP</name>
        <dbReference type="ChEBI" id="CHEBI:30616"/>
    </ligand>
</feature>
<organism>
    <name type="scientific">Lactococcus lactis subsp. lactis (strain IL1403)</name>
    <name type="common">Streptococcus lactis</name>
    <dbReference type="NCBI Taxonomy" id="272623"/>
    <lineage>
        <taxon>Bacteria</taxon>
        <taxon>Bacillati</taxon>
        <taxon>Bacillota</taxon>
        <taxon>Bacilli</taxon>
        <taxon>Lactobacillales</taxon>
        <taxon>Streptococcaceae</taxon>
        <taxon>Lactococcus</taxon>
    </lineage>
</organism>